<reference key="1">
    <citation type="journal article" date="2008" name="Environ. Microbiol.">
        <title>The genome of Erwinia tasmaniensis strain Et1/99, a non-pathogenic bacterium in the genus Erwinia.</title>
        <authorList>
            <person name="Kube M."/>
            <person name="Migdoll A.M."/>
            <person name="Mueller I."/>
            <person name="Kuhl H."/>
            <person name="Beck A."/>
            <person name="Reinhardt R."/>
            <person name="Geider K."/>
        </authorList>
    </citation>
    <scope>NUCLEOTIDE SEQUENCE [LARGE SCALE GENOMIC DNA]</scope>
    <source>
        <strain>DSM 17950 / CFBP 7177 / CIP 109463 / NCPPB 4357 / Et1/99</strain>
    </source>
</reference>
<dbReference type="EC" id="2.7.1.48" evidence="1"/>
<dbReference type="EMBL" id="CU468135">
    <property type="protein sequence ID" value="CAO96363.1"/>
    <property type="molecule type" value="Genomic_DNA"/>
</dbReference>
<dbReference type="RefSeq" id="WP_012441057.1">
    <property type="nucleotide sequence ID" value="NC_010694.1"/>
</dbReference>
<dbReference type="SMR" id="B2VFR1"/>
<dbReference type="STRING" id="465817.ETA_13170"/>
<dbReference type="KEGG" id="eta:ETA_13170"/>
<dbReference type="eggNOG" id="COG0572">
    <property type="taxonomic scope" value="Bacteria"/>
</dbReference>
<dbReference type="HOGENOM" id="CLU_021278_1_2_6"/>
<dbReference type="OrthoDB" id="9777642at2"/>
<dbReference type="UniPathway" id="UPA00574">
    <property type="reaction ID" value="UER00637"/>
</dbReference>
<dbReference type="UniPathway" id="UPA00579">
    <property type="reaction ID" value="UER00640"/>
</dbReference>
<dbReference type="Proteomes" id="UP000001726">
    <property type="component" value="Chromosome"/>
</dbReference>
<dbReference type="GO" id="GO:0005737">
    <property type="term" value="C:cytoplasm"/>
    <property type="evidence" value="ECO:0007669"/>
    <property type="project" value="UniProtKB-SubCell"/>
</dbReference>
<dbReference type="GO" id="GO:0005524">
    <property type="term" value="F:ATP binding"/>
    <property type="evidence" value="ECO:0007669"/>
    <property type="project" value="UniProtKB-UniRule"/>
</dbReference>
<dbReference type="GO" id="GO:0043771">
    <property type="term" value="F:cytidine kinase activity"/>
    <property type="evidence" value="ECO:0007669"/>
    <property type="project" value="RHEA"/>
</dbReference>
<dbReference type="GO" id="GO:0004849">
    <property type="term" value="F:uridine kinase activity"/>
    <property type="evidence" value="ECO:0007669"/>
    <property type="project" value="UniProtKB-UniRule"/>
</dbReference>
<dbReference type="GO" id="GO:0044211">
    <property type="term" value="P:CTP salvage"/>
    <property type="evidence" value="ECO:0007669"/>
    <property type="project" value="UniProtKB-UniRule"/>
</dbReference>
<dbReference type="GO" id="GO:0044206">
    <property type="term" value="P:UMP salvage"/>
    <property type="evidence" value="ECO:0007669"/>
    <property type="project" value="UniProtKB-UniRule"/>
</dbReference>
<dbReference type="CDD" id="cd02023">
    <property type="entry name" value="UMPK"/>
    <property type="match status" value="1"/>
</dbReference>
<dbReference type="FunFam" id="3.40.50.300:FF:000252">
    <property type="entry name" value="Uridine kinase"/>
    <property type="match status" value="1"/>
</dbReference>
<dbReference type="Gene3D" id="3.40.50.300">
    <property type="entry name" value="P-loop containing nucleotide triphosphate hydrolases"/>
    <property type="match status" value="1"/>
</dbReference>
<dbReference type="HAMAP" id="MF_00551">
    <property type="entry name" value="Uridine_kinase"/>
    <property type="match status" value="1"/>
</dbReference>
<dbReference type="InterPro" id="IPR027417">
    <property type="entry name" value="P-loop_NTPase"/>
</dbReference>
<dbReference type="InterPro" id="IPR006083">
    <property type="entry name" value="PRK/URK"/>
</dbReference>
<dbReference type="InterPro" id="IPR026008">
    <property type="entry name" value="Uridine_kinase"/>
</dbReference>
<dbReference type="InterPro" id="IPR000764">
    <property type="entry name" value="Uridine_kinase-like"/>
</dbReference>
<dbReference type="NCBIfam" id="NF004018">
    <property type="entry name" value="PRK05480.1"/>
    <property type="match status" value="1"/>
</dbReference>
<dbReference type="NCBIfam" id="TIGR00235">
    <property type="entry name" value="udk"/>
    <property type="match status" value="1"/>
</dbReference>
<dbReference type="PANTHER" id="PTHR10285">
    <property type="entry name" value="URIDINE KINASE"/>
    <property type="match status" value="1"/>
</dbReference>
<dbReference type="Pfam" id="PF00485">
    <property type="entry name" value="PRK"/>
    <property type="match status" value="1"/>
</dbReference>
<dbReference type="PRINTS" id="PR00988">
    <property type="entry name" value="URIDINKINASE"/>
</dbReference>
<dbReference type="SUPFAM" id="SSF52540">
    <property type="entry name" value="P-loop containing nucleoside triphosphate hydrolases"/>
    <property type="match status" value="1"/>
</dbReference>
<sequence>MADKSHQCVIVGIAGASASGKSLIASTLYREVRERVGDENIGVIPEDAYYKDQSHLTMEERVKTNYDHPSAMDHSLLLQHLQMLKAGQAIDLPVYSYVEHTRTQKTIRLEPKKVIILEGILLLTDARLRQEMNFSIFVDTPLDICLMRRMKRDVNERGRSMDSVMAQYQKTVRPMFLQFIEPSKQYADIIVPRGGKNRIAIDILKAKINQFFE</sequence>
<gene>
    <name evidence="1" type="primary">udk</name>
    <name type="ordered locus">ETA_13170</name>
</gene>
<organism>
    <name type="scientific">Erwinia tasmaniensis (strain DSM 17950 / CFBP 7177 / CIP 109463 / NCPPB 4357 / Et1/99)</name>
    <dbReference type="NCBI Taxonomy" id="465817"/>
    <lineage>
        <taxon>Bacteria</taxon>
        <taxon>Pseudomonadati</taxon>
        <taxon>Pseudomonadota</taxon>
        <taxon>Gammaproteobacteria</taxon>
        <taxon>Enterobacterales</taxon>
        <taxon>Erwiniaceae</taxon>
        <taxon>Erwinia</taxon>
    </lineage>
</organism>
<evidence type="ECO:0000255" key="1">
    <source>
        <dbReference type="HAMAP-Rule" id="MF_00551"/>
    </source>
</evidence>
<feature type="chain" id="PRO_1000129075" description="Uridine kinase">
    <location>
        <begin position="1"/>
        <end position="213"/>
    </location>
</feature>
<feature type="binding site" evidence="1">
    <location>
        <begin position="15"/>
        <end position="22"/>
    </location>
    <ligand>
        <name>ATP</name>
        <dbReference type="ChEBI" id="CHEBI:30616"/>
    </ligand>
</feature>
<name>URK_ERWT9</name>
<protein>
    <recommendedName>
        <fullName evidence="1">Uridine kinase</fullName>
        <ecNumber evidence="1">2.7.1.48</ecNumber>
    </recommendedName>
    <alternativeName>
        <fullName evidence="1">Cytidine monophosphokinase</fullName>
    </alternativeName>
    <alternativeName>
        <fullName evidence="1">Uridine monophosphokinase</fullName>
    </alternativeName>
</protein>
<keyword id="KW-0067">ATP-binding</keyword>
<keyword id="KW-0963">Cytoplasm</keyword>
<keyword id="KW-0418">Kinase</keyword>
<keyword id="KW-0547">Nucleotide-binding</keyword>
<keyword id="KW-1185">Reference proteome</keyword>
<keyword id="KW-0808">Transferase</keyword>
<accession>B2VFR1</accession>
<proteinExistence type="inferred from homology"/>
<comment type="catalytic activity">
    <reaction evidence="1">
        <text>uridine + ATP = UMP + ADP + H(+)</text>
        <dbReference type="Rhea" id="RHEA:16825"/>
        <dbReference type="ChEBI" id="CHEBI:15378"/>
        <dbReference type="ChEBI" id="CHEBI:16704"/>
        <dbReference type="ChEBI" id="CHEBI:30616"/>
        <dbReference type="ChEBI" id="CHEBI:57865"/>
        <dbReference type="ChEBI" id="CHEBI:456216"/>
        <dbReference type="EC" id="2.7.1.48"/>
    </reaction>
</comment>
<comment type="catalytic activity">
    <reaction evidence="1">
        <text>cytidine + ATP = CMP + ADP + H(+)</text>
        <dbReference type="Rhea" id="RHEA:24674"/>
        <dbReference type="ChEBI" id="CHEBI:15378"/>
        <dbReference type="ChEBI" id="CHEBI:17562"/>
        <dbReference type="ChEBI" id="CHEBI:30616"/>
        <dbReference type="ChEBI" id="CHEBI:60377"/>
        <dbReference type="ChEBI" id="CHEBI:456216"/>
        <dbReference type="EC" id="2.7.1.48"/>
    </reaction>
</comment>
<comment type="pathway">
    <text evidence="1">Pyrimidine metabolism; CTP biosynthesis via salvage pathway; CTP from cytidine: step 1/3.</text>
</comment>
<comment type="pathway">
    <text evidence="1">Pyrimidine metabolism; UMP biosynthesis via salvage pathway; UMP from uridine: step 1/1.</text>
</comment>
<comment type="subcellular location">
    <subcellularLocation>
        <location evidence="1">Cytoplasm</location>
    </subcellularLocation>
</comment>
<comment type="similarity">
    <text evidence="1">Belongs to the uridine kinase family.</text>
</comment>